<accession>Q5HR54</accession>
<feature type="chain" id="PRO_0000151206" description="Undecaprenyl-diphosphatase">
    <location>
        <begin position="1"/>
        <end position="290"/>
    </location>
</feature>
<feature type="transmembrane region" description="Helical" evidence="1">
    <location>
        <begin position="1"/>
        <end position="21"/>
    </location>
</feature>
<feature type="transmembrane region" description="Helical" evidence="1">
    <location>
        <begin position="48"/>
        <end position="68"/>
    </location>
</feature>
<feature type="transmembrane region" description="Helical" evidence="1">
    <location>
        <begin position="101"/>
        <end position="121"/>
    </location>
</feature>
<feature type="transmembrane region" description="Helical" evidence="1">
    <location>
        <begin position="125"/>
        <end position="145"/>
    </location>
</feature>
<feature type="transmembrane region" description="Helical" evidence="1">
    <location>
        <begin position="161"/>
        <end position="181"/>
    </location>
</feature>
<feature type="transmembrane region" description="Helical" evidence="1">
    <location>
        <begin position="202"/>
        <end position="222"/>
    </location>
</feature>
<feature type="transmembrane region" description="Helical" evidence="1">
    <location>
        <begin position="231"/>
        <end position="251"/>
    </location>
</feature>
<feature type="transmembrane region" description="Helical" evidence="1">
    <location>
        <begin position="266"/>
        <end position="286"/>
    </location>
</feature>
<organism>
    <name type="scientific">Staphylococcus epidermidis (strain ATCC 35984 / DSM 28319 / BCRC 17069 / CCUG 31568 / BM 3577 / RP62A)</name>
    <dbReference type="NCBI Taxonomy" id="176279"/>
    <lineage>
        <taxon>Bacteria</taxon>
        <taxon>Bacillati</taxon>
        <taxon>Bacillota</taxon>
        <taxon>Bacilli</taxon>
        <taxon>Bacillales</taxon>
        <taxon>Staphylococcaceae</taxon>
        <taxon>Staphylococcus</taxon>
    </lineage>
</organism>
<name>UPPP_STAEQ</name>
<reference key="1">
    <citation type="journal article" date="2005" name="J. Bacteriol.">
        <title>Insights on evolution of virulence and resistance from the complete genome analysis of an early methicillin-resistant Staphylococcus aureus strain and a biofilm-producing methicillin-resistant Staphylococcus epidermidis strain.</title>
        <authorList>
            <person name="Gill S.R."/>
            <person name="Fouts D.E."/>
            <person name="Archer G.L."/>
            <person name="Mongodin E.F."/>
            <person name="DeBoy R.T."/>
            <person name="Ravel J."/>
            <person name="Paulsen I.T."/>
            <person name="Kolonay J.F."/>
            <person name="Brinkac L.M."/>
            <person name="Beanan M.J."/>
            <person name="Dodson R.J."/>
            <person name="Daugherty S.C."/>
            <person name="Madupu R."/>
            <person name="Angiuoli S.V."/>
            <person name="Durkin A.S."/>
            <person name="Haft D.H."/>
            <person name="Vamathevan J.J."/>
            <person name="Khouri H."/>
            <person name="Utterback T.R."/>
            <person name="Lee C."/>
            <person name="Dimitrov G."/>
            <person name="Jiang L."/>
            <person name="Qin H."/>
            <person name="Weidman J."/>
            <person name="Tran K."/>
            <person name="Kang K.H."/>
            <person name="Hance I.R."/>
            <person name="Nelson K.E."/>
            <person name="Fraser C.M."/>
        </authorList>
    </citation>
    <scope>NUCLEOTIDE SEQUENCE [LARGE SCALE GENOMIC DNA]</scope>
    <source>
        <strain>ATCC 35984 / DSM 28319 / BCRC 17069 / CCUG 31568 / BM 3577 / RP62A</strain>
    </source>
</reference>
<comment type="function">
    <text evidence="1">Catalyzes the dephosphorylation of undecaprenyl diphosphate (UPP). Confers resistance to bacitracin.</text>
</comment>
<comment type="catalytic activity">
    <reaction evidence="1">
        <text>di-trans,octa-cis-undecaprenyl diphosphate + H2O = di-trans,octa-cis-undecaprenyl phosphate + phosphate + H(+)</text>
        <dbReference type="Rhea" id="RHEA:28094"/>
        <dbReference type="ChEBI" id="CHEBI:15377"/>
        <dbReference type="ChEBI" id="CHEBI:15378"/>
        <dbReference type="ChEBI" id="CHEBI:43474"/>
        <dbReference type="ChEBI" id="CHEBI:58405"/>
        <dbReference type="ChEBI" id="CHEBI:60392"/>
        <dbReference type="EC" id="3.6.1.27"/>
    </reaction>
</comment>
<comment type="subcellular location">
    <subcellularLocation>
        <location evidence="1">Cell membrane</location>
        <topology evidence="1">Multi-pass membrane protein</topology>
    </subcellularLocation>
</comment>
<comment type="miscellaneous">
    <text>Bacitracin is thought to be involved in the inhibition of peptidoglycan synthesis by sequestering undecaprenyl diphosphate, thereby reducing the pool of lipid carrier available.</text>
</comment>
<comment type="similarity">
    <text evidence="1">Belongs to the UppP family.</text>
</comment>
<evidence type="ECO:0000255" key="1">
    <source>
        <dbReference type="HAMAP-Rule" id="MF_01006"/>
    </source>
</evidence>
<proteinExistence type="inferred from homology"/>
<sequence length="290" mass="32212">MFLLELIKGIILGIVEGLTEFAPVSSTGHMILVDDMWLKSTNFLGSQSAFTFKVVIQLGSVFAAAWVFRERFLEILHIGQHKPEPSTSGDRRSKPRRLNLIHVLVGMVPAGILGFLFDDLIEKYLFSVPTVLIGLFIGAIYMIIADKYSKTVQHPQTVDQINYFQAFVIGISQAIAMWPGFSRSGSTISTGVLMKLNHKAASDFTFIMSVPIMLAASGLSLLKHYEYIHLAHIPFYILGFLAAFIVGLIAIKTFLHLINKVKLVPFAIYRIVLVIFIAILYFGFGIGKGI</sequence>
<keyword id="KW-0046">Antibiotic resistance</keyword>
<keyword id="KW-1003">Cell membrane</keyword>
<keyword id="KW-0133">Cell shape</keyword>
<keyword id="KW-0961">Cell wall biogenesis/degradation</keyword>
<keyword id="KW-0378">Hydrolase</keyword>
<keyword id="KW-0472">Membrane</keyword>
<keyword id="KW-0573">Peptidoglycan synthesis</keyword>
<keyword id="KW-1185">Reference proteome</keyword>
<keyword id="KW-0812">Transmembrane</keyword>
<keyword id="KW-1133">Transmembrane helix</keyword>
<protein>
    <recommendedName>
        <fullName evidence="1">Undecaprenyl-diphosphatase</fullName>
        <ecNumber evidence="1">3.6.1.27</ecNumber>
    </recommendedName>
    <alternativeName>
        <fullName evidence="1">Bacitracin resistance protein</fullName>
    </alternativeName>
    <alternativeName>
        <fullName evidence="1">Undecaprenyl pyrophosphate phosphatase</fullName>
    </alternativeName>
</protein>
<gene>
    <name evidence="1" type="primary">uppP</name>
    <name type="synonym">bacA</name>
    <name type="ordered locus">SERP0339</name>
</gene>
<dbReference type="EC" id="3.6.1.27" evidence="1"/>
<dbReference type="EMBL" id="CP000029">
    <property type="protein sequence ID" value="AAW53717.1"/>
    <property type="molecule type" value="Genomic_DNA"/>
</dbReference>
<dbReference type="RefSeq" id="WP_001832082.1">
    <property type="nucleotide sequence ID" value="NC_002976.3"/>
</dbReference>
<dbReference type="SMR" id="Q5HR54"/>
<dbReference type="STRING" id="176279.SERP0339"/>
<dbReference type="KEGG" id="ser:SERP0339"/>
<dbReference type="eggNOG" id="COG1968">
    <property type="taxonomic scope" value="Bacteria"/>
</dbReference>
<dbReference type="HOGENOM" id="CLU_060296_2_0_9"/>
<dbReference type="Proteomes" id="UP000000531">
    <property type="component" value="Chromosome"/>
</dbReference>
<dbReference type="GO" id="GO:0005886">
    <property type="term" value="C:plasma membrane"/>
    <property type="evidence" value="ECO:0007669"/>
    <property type="project" value="UniProtKB-SubCell"/>
</dbReference>
<dbReference type="GO" id="GO:0050380">
    <property type="term" value="F:undecaprenyl-diphosphatase activity"/>
    <property type="evidence" value="ECO:0007669"/>
    <property type="project" value="UniProtKB-UniRule"/>
</dbReference>
<dbReference type="GO" id="GO:0071555">
    <property type="term" value="P:cell wall organization"/>
    <property type="evidence" value="ECO:0007669"/>
    <property type="project" value="UniProtKB-KW"/>
</dbReference>
<dbReference type="GO" id="GO:0009252">
    <property type="term" value="P:peptidoglycan biosynthetic process"/>
    <property type="evidence" value="ECO:0007669"/>
    <property type="project" value="UniProtKB-KW"/>
</dbReference>
<dbReference type="GO" id="GO:0008360">
    <property type="term" value="P:regulation of cell shape"/>
    <property type="evidence" value="ECO:0007669"/>
    <property type="project" value="UniProtKB-KW"/>
</dbReference>
<dbReference type="GO" id="GO:0046677">
    <property type="term" value="P:response to antibiotic"/>
    <property type="evidence" value="ECO:0007669"/>
    <property type="project" value="UniProtKB-UniRule"/>
</dbReference>
<dbReference type="HAMAP" id="MF_01006">
    <property type="entry name" value="Undec_diphosphatase"/>
    <property type="match status" value="1"/>
</dbReference>
<dbReference type="InterPro" id="IPR003824">
    <property type="entry name" value="UppP"/>
</dbReference>
<dbReference type="NCBIfam" id="NF001390">
    <property type="entry name" value="PRK00281.1-4"/>
    <property type="match status" value="1"/>
</dbReference>
<dbReference type="NCBIfam" id="TIGR00753">
    <property type="entry name" value="undec_PP_bacA"/>
    <property type="match status" value="1"/>
</dbReference>
<dbReference type="PANTHER" id="PTHR30622">
    <property type="entry name" value="UNDECAPRENYL-DIPHOSPHATASE"/>
    <property type="match status" value="1"/>
</dbReference>
<dbReference type="PANTHER" id="PTHR30622:SF3">
    <property type="entry name" value="UNDECAPRENYL-DIPHOSPHATASE"/>
    <property type="match status" value="1"/>
</dbReference>
<dbReference type="Pfam" id="PF02673">
    <property type="entry name" value="BacA"/>
    <property type="match status" value="1"/>
</dbReference>